<accession>Q3TVI8</accession>
<accession>Q3TD91</accession>
<accession>Q3TWL9</accession>
<accession>Q8R319</accession>
<sequence>MASCPDSDNSWVLAGSENLPVETLGPEPRMDPESEGASQALRDSSKADGKELAGTLDGEEKLFQTESSQRETAVLTESAAKGTLGADGHGTEAPGDTVVQEDSQETPVATSLGPDTQDLESEIHPQNLPSSPRAVWKEHRCSSSDDDTDVDVEGLRRRRGREPSSSQPVVPVDVEDQAKGEGIGGELGISLNMCFLGALVLLGLGILLFSGTLLEPETGPMEEAELQVFPETGPETELVETLGNRQDEIEHLQASSVPPDSVPSLQSMGFLLDKLAKENQDIRLLQAQLQAQKEELQSLLHQPKGLEEENARLREALQQGKTSHQALESELQQLRARLQGLEANCVRGVDGVCLNWGGDPQDGKATKEQGHKGQEPDPSLLEQHKQLEAEAKALRQELQRQWQLLGSVHWDLQRGLRDAGRGAPAHPGLAELGHMLAQTLQDLENQGINTGRSPNDSEAWHQKKPHTQSPREWGGKEKWRGGQRDQKAEHWKPRKEESGQERQRSWRDEGREHTGRWREDRLRADESGSRKDSKRQDPKVHPRKDGNSHSVERQKHSWGKDNSPDALSSWEELLRRKYRPPQGCSGVADCARQEGLALFGVELAPVRQQELASVLREYLSRLPWAGQLTKQLPLSPAYFGEDGIFRHDRLRFRDFVDALEDSLEEVALKQTGDDDEVDDFEDFVFGHFFGDKALKKRSRKKEKHSWNPRVVGPREEHSRHPHHYHQG</sequence>
<reference key="1">
    <citation type="journal article" date="2005" name="Science">
        <title>The transcriptional landscape of the mammalian genome.</title>
        <authorList>
            <person name="Carninci P."/>
            <person name="Kasukawa T."/>
            <person name="Katayama S."/>
            <person name="Gough J."/>
            <person name="Frith M.C."/>
            <person name="Maeda N."/>
            <person name="Oyama R."/>
            <person name="Ravasi T."/>
            <person name="Lenhard B."/>
            <person name="Wells C."/>
            <person name="Kodzius R."/>
            <person name="Shimokawa K."/>
            <person name="Bajic V.B."/>
            <person name="Brenner S.E."/>
            <person name="Batalov S."/>
            <person name="Forrest A.R."/>
            <person name="Zavolan M."/>
            <person name="Davis M.J."/>
            <person name="Wilming L.G."/>
            <person name="Aidinis V."/>
            <person name="Allen J.E."/>
            <person name="Ambesi-Impiombato A."/>
            <person name="Apweiler R."/>
            <person name="Aturaliya R.N."/>
            <person name="Bailey T.L."/>
            <person name="Bansal M."/>
            <person name="Baxter L."/>
            <person name="Beisel K.W."/>
            <person name="Bersano T."/>
            <person name="Bono H."/>
            <person name="Chalk A.M."/>
            <person name="Chiu K.P."/>
            <person name="Choudhary V."/>
            <person name="Christoffels A."/>
            <person name="Clutterbuck D.R."/>
            <person name="Crowe M.L."/>
            <person name="Dalla E."/>
            <person name="Dalrymple B.P."/>
            <person name="de Bono B."/>
            <person name="Della Gatta G."/>
            <person name="di Bernardo D."/>
            <person name="Down T."/>
            <person name="Engstrom P."/>
            <person name="Fagiolini M."/>
            <person name="Faulkner G."/>
            <person name="Fletcher C.F."/>
            <person name="Fukushima T."/>
            <person name="Furuno M."/>
            <person name="Futaki S."/>
            <person name="Gariboldi M."/>
            <person name="Georgii-Hemming P."/>
            <person name="Gingeras T.R."/>
            <person name="Gojobori T."/>
            <person name="Green R.E."/>
            <person name="Gustincich S."/>
            <person name="Harbers M."/>
            <person name="Hayashi Y."/>
            <person name="Hensch T.K."/>
            <person name="Hirokawa N."/>
            <person name="Hill D."/>
            <person name="Huminiecki L."/>
            <person name="Iacono M."/>
            <person name="Ikeo K."/>
            <person name="Iwama A."/>
            <person name="Ishikawa T."/>
            <person name="Jakt M."/>
            <person name="Kanapin A."/>
            <person name="Katoh M."/>
            <person name="Kawasawa Y."/>
            <person name="Kelso J."/>
            <person name="Kitamura H."/>
            <person name="Kitano H."/>
            <person name="Kollias G."/>
            <person name="Krishnan S.P."/>
            <person name="Kruger A."/>
            <person name="Kummerfeld S.K."/>
            <person name="Kurochkin I.V."/>
            <person name="Lareau L.F."/>
            <person name="Lazarevic D."/>
            <person name="Lipovich L."/>
            <person name="Liu J."/>
            <person name="Liuni S."/>
            <person name="McWilliam S."/>
            <person name="Madan Babu M."/>
            <person name="Madera M."/>
            <person name="Marchionni L."/>
            <person name="Matsuda H."/>
            <person name="Matsuzawa S."/>
            <person name="Miki H."/>
            <person name="Mignone F."/>
            <person name="Miyake S."/>
            <person name="Morris K."/>
            <person name="Mottagui-Tabar S."/>
            <person name="Mulder N."/>
            <person name="Nakano N."/>
            <person name="Nakauchi H."/>
            <person name="Ng P."/>
            <person name="Nilsson R."/>
            <person name="Nishiguchi S."/>
            <person name="Nishikawa S."/>
            <person name="Nori F."/>
            <person name="Ohara O."/>
            <person name="Okazaki Y."/>
            <person name="Orlando V."/>
            <person name="Pang K.C."/>
            <person name="Pavan W.J."/>
            <person name="Pavesi G."/>
            <person name="Pesole G."/>
            <person name="Petrovsky N."/>
            <person name="Piazza S."/>
            <person name="Reed J."/>
            <person name="Reid J.F."/>
            <person name="Ring B.Z."/>
            <person name="Ringwald M."/>
            <person name="Rost B."/>
            <person name="Ruan Y."/>
            <person name="Salzberg S.L."/>
            <person name="Sandelin A."/>
            <person name="Schneider C."/>
            <person name="Schoenbach C."/>
            <person name="Sekiguchi K."/>
            <person name="Semple C.A."/>
            <person name="Seno S."/>
            <person name="Sessa L."/>
            <person name="Sheng Y."/>
            <person name="Shibata Y."/>
            <person name="Shimada H."/>
            <person name="Shimada K."/>
            <person name="Silva D."/>
            <person name="Sinclair B."/>
            <person name="Sperling S."/>
            <person name="Stupka E."/>
            <person name="Sugiura K."/>
            <person name="Sultana R."/>
            <person name="Takenaka Y."/>
            <person name="Taki K."/>
            <person name="Tammoja K."/>
            <person name="Tan S.L."/>
            <person name="Tang S."/>
            <person name="Taylor M.S."/>
            <person name="Tegner J."/>
            <person name="Teichmann S.A."/>
            <person name="Ueda H.R."/>
            <person name="van Nimwegen E."/>
            <person name="Verardo R."/>
            <person name="Wei C.L."/>
            <person name="Yagi K."/>
            <person name="Yamanishi H."/>
            <person name="Zabarovsky E."/>
            <person name="Zhu S."/>
            <person name="Zimmer A."/>
            <person name="Hide W."/>
            <person name="Bult C."/>
            <person name="Grimmond S.M."/>
            <person name="Teasdale R.D."/>
            <person name="Liu E.T."/>
            <person name="Brusic V."/>
            <person name="Quackenbush J."/>
            <person name="Wahlestedt C."/>
            <person name="Mattick J.S."/>
            <person name="Hume D.A."/>
            <person name="Kai C."/>
            <person name="Sasaki D."/>
            <person name="Tomaru Y."/>
            <person name="Fukuda S."/>
            <person name="Kanamori-Katayama M."/>
            <person name="Suzuki M."/>
            <person name="Aoki J."/>
            <person name="Arakawa T."/>
            <person name="Iida J."/>
            <person name="Imamura K."/>
            <person name="Itoh M."/>
            <person name="Kato T."/>
            <person name="Kawaji H."/>
            <person name="Kawagashira N."/>
            <person name="Kawashima T."/>
            <person name="Kojima M."/>
            <person name="Kondo S."/>
            <person name="Konno H."/>
            <person name="Nakano K."/>
            <person name="Ninomiya N."/>
            <person name="Nishio T."/>
            <person name="Okada M."/>
            <person name="Plessy C."/>
            <person name="Shibata K."/>
            <person name="Shiraki T."/>
            <person name="Suzuki S."/>
            <person name="Tagami M."/>
            <person name="Waki K."/>
            <person name="Watahiki A."/>
            <person name="Okamura-Oho Y."/>
            <person name="Suzuki H."/>
            <person name="Kawai J."/>
            <person name="Hayashizaki Y."/>
        </authorList>
    </citation>
    <scope>NUCLEOTIDE SEQUENCE [LARGE SCALE MRNA]</scope>
    <source>
        <strain>C57BL/6J</strain>
        <strain>NOD</strain>
    </source>
</reference>
<reference key="2">
    <citation type="journal article" date="2004" name="Genome Res.">
        <title>The status, quality, and expansion of the NIH full-length cDNA project: the Mammalian Gene Collection (MGC).</title>
        <authorList>
            <consortium name="The MGC Project Team"/>
        </authorList>
    </citation>
    <scope>NUCLEOTIDE SEQUENCE [LARGE SCALE MRNA]</scope>
    <source>
        <strain>FVB/N</strain>
        <tissue>Mammary tumor</tissue>
    </source>
</reference>
<reference key="3">
    <citation type="journal article" date="2010" name="Cell">
        <title>A tissue-specific atlas of mouse protein phosphorylation and expression.</title>
        <authorList>
            <person name="Huttlin E.L."/>
            <person name="Jedrychowski M.P."/>
            <person name="Elias J.E."/>
            <person name="Goswami T."/>
            <person name="Rad R."/>
            <person name="Beausoleil S.A."/>
            <person name="Villen J."/>
            <person name="Haas W."/>
            <person name="Sowa M.E."/>
            <person name="Gygi S.P."/>
        </authorList>
    </citation>
    <scope>PHOSPHORYLATION [LARGE SCALE ANALYSIS] AT SER-143 AND SER-164</scope>
    <scope>IDENTIFICATION BY MASS SPECTROMETRY [LARGE SCALE ANALYSIS]</scope>
    <source>
        <tissue>Brain</tissue>
        <tissue>Brown adipose tissue</tissue>
        <tissue>Heart</tissue>
        <tissue>Kidney</tissue>
        <tissue>Lung</tissue>
    </source>
</reference>
<reference key="4">
    <citation type="journal article" date="2012" name="Mol. Endocrinol.">
        <title>TEX11 modulates germ cell proliferation by competing with estrogen receptor beta for the binding to HPIP.</title>
        <authorList>
            <person name="Yu Y.H."/>
            <person name="Siao F.P."/>
            <person name="Hsu L.C."/>
            <person name="Yen P.H."/>
        </authorList>
    </citation>
    <scope>INTERACTION WITH TEX11</scope>
</reference>
<name>PBIP1_MOUSE</name>
<organism>
    <name type="scientific">Mus musculus</name>
    <name type="common">Mouse</name>
    <dbReference type="NCBI Taxonomy" id="10090"/>
    <lineage>
        <taxon>Eukaryota</taxon>
        <taxon>Metazoa</taxon>
        <taxon>Chordata</taxon>
        <taxon>Craniata</taxon>
        <taxon>Vertebrata</taxon>
        <taxon>Euteleostomi</taxon>
        <taxon>Mammalia</taxon>
        <taxon>Eutheria</taxon>
        <taxon>Euarchontoglires</taxon>
        <taxon>Glires</taxon>
        <taxon>Rodentia</taxon>
        <taxon>Myomorpha</taxon>
        <taxon>Muroidea</taxon>
        <taxon>Muridae</taxon>
        <taxon>Murinae</taxon>
        <taxon>Mus</taxon>
        <taxon>Mus</taxon>
    </lineage>
</organism>
<proteinExistence type="evidence at protein level"/>
<feature type="chain" id="PRO_0000306116" description="Pre-B-cell leukemia transcription factor-interacting protein 1">
    <location>
        <begin position="1"/>
        <end position="727"/>
    </location>
</feature>
<feature type="region of interest" description="Disordered" evidence="5">
    <location>
        <begin position="1"/>
        <end position="169"/>
    </location>
</feature>
<feature type="region of interest" description="Disordered" evidence="5">
    <location>
        <begin position="446"/>
        <end position="565"/>
    </location>
</feature>
<feature type="region of interest" description="Disordered" evidence="5">
    <location>
        <begin position="694"/>
        <end position="727"/>
    </location>
</feature>
<feature type="coiled-coil region" evidence="4">
    <location>
        <begin position="270"/>
        <end position="350"/>
    </location>
</feature>
<feature type="coiled-coil region" evidence="4">
    <location>
        <begin position="377"/>
        <end position="405"/>
    </location>
</feature>
<feature type="short sequence motif" description="Nuclear localization signal" evidence="1">
    <location>
        <begin position="486"/>
        <end position="506"/>
    </location>
</feature>
<feature type="short sequence motif" description="Nuclear localization signal" evidence="1">
    <location>
        <begin position="691"/>
        <end position="716"/>
    </location>
</feature>
<feature type="compositionally biased region" description="Polar residues" evidence="5">
    <location>
        <begin position="1"/>
        <end position="10"/>
    </location>
</feature>
<feature type="compositionally biased region" description="Polar residues" evidence="5">
    <location>
        <begin position="446"/>
        <end position="456"/>
    </location>
</feature>
<feature type="compositionally biased region" description="Basic and acidic residues" evidence="5">
    <location>
        <begin position="473"/>
        <end position="563"/>
    </location>
</feature>
<feature type="compositionally biased region" description="Basic residues" evidence="5">
    <location>
        <begin position="694"/>
        <end position="703"/>
    </location>
</feature>
<feature type="modified residue" description="Phosphoserine" evidence="2">
    <location>
        <position position="131"/>
    </location>
</feature>
<feature type="modified residue" description="Phosphoserine" evidence="3">
    <location>
        <position position="142"/>
    </location>
</feature>
<feature type="modified residue" description="Phosphoserine" evidence="8">
    <location>
        <position position="143"/>
    </location>
</feature>
<feature type="modified residue" description="Phosphoserine" evidence="3">
    <location>
        <position position="144"/>
    </location>
</feature>
<feature type="modified residue" description="Phosphothreonine" evidence="3">
    <location>
        <position position="148"/>
    </location>
</feature>
<feature type="modified residue" description="Phosphoserine" evidence="8">
    <location>
        <position position="164"/>
    </location>
</feature>
<feature type="modified residue" description="Phosphoserine" evidence="2">
    <location>
        <position position="563"/>
    </location>
</feature>
<feature type="sequence conflict" description="In Ref. 1; BAE35247." evidence="7" ref="1">
    <original>E</original>
    <variation>G</variation>
    <location>
        <position position="120"/>
    </location>
</feature>
<feature type="sequence conflict" description="In Ref. 1; BAE35630/BAE41713/BAE35247." evidence="7" ref="1">
    <original>W</original>
    <variation>R</variation>
    <location>
        <position position="410"/>
    </location>
</feature>
<feature type="sequence conflict" description="In Ref. 1; BAE41713." evidence="7" ref="1">
    <original>R</original>
    <variation>H</variation>
    <location>
        <position position="516"/>
    </location>
</feature>
<evidence type="ECO:0000250" key="1"/>
<evidence type="ECO:0000250" key="2">
    <source>
        <dbReference type="UniProtKB" id="A2VD12"/>
    </source>
</evidence>
<evidence type="ECO:0000250" key="3">
    <source>
        <dbReference type="UniProtKB" id="Q96AQ6"/>
    </source>
</evidence>
<evidence type="ECO:0000255" key="4"/>
<evidence type="ECO:0000256" key="5">
    <source>
        <dbReference type="SAM" id="MobiDB-lite"/>
    </source>
</evidence>
<evidence type="ECO:0000269" key="6">
    <source>
    </source>
</evidence>
<evidence type="ECO:0000305" key="7"/>
<evidence type="ECO:0007744" key="8">
    <source>
    </source>
</evidence>
<gene>
    <name type="primary">Pbxip1</name>
    <name type="synonym">Hpip</name>
</gene>
<dbReference type="EMBL" id="AK028858">
    <property type="protein sequence ID" value="BAC26157.1"/>
    <property type="molecule type" value="mRNA"/>
</dbReference>
<dbReference type="EMBL" id="AK159422">
    <property type="protein sequence ID" value="BAE35070.1"/>
    <property type="molecule type" value="mRNA"/>
</dbReference>
<dbReference type="EMBL" id="AK159448">
    <property type="protein sequence ID" value="BAE35092.1"/>
    <property type="molecule type" value="mRNA"/>
</dbReference>
<dbReference type="EMBL" id="AK159633">
    <property type="protein sequence ID" value="BAE35247.1"/>
    <property type="molecule type" value="mRNA"/>
</dbReference>
<dbReference type="EMBL" id="AK160103">
    <property type="protein sequence ID" value="BAE35630.1"/>
    <property type="molecule type" value="mRNA"/>
</dbReference>
<dbReference type="EMBL" id="AK170318">
    <property type="protein sequence ID" value="BAE41713.1"/>
    <property type="molecule type" value="mRNA"/>
</dbReference>
<dbReference type="EMBL" id="BC026838">
    <property type="protein sequence ID" value="AAH26838.1"/>
    <property type="molecule type" value="mRNA"/>
</dbReference>
<dbReference type="EMBL" id="BC027771">
    <property type="protein sequence ID" value="AAH27771.1"/>
    <property type="molecule type" value="mRNA"/>
</dbReference>
<dbReference type="EMBL" id="BC034200">
    <property type="protein sequence ID" value="AAH34200.1"/>
    <property type="molecule type" value="mRNA"/>
</dbReference>
<dbReference type="CCDS" id="CCDS17510.1"/>
<dbReference type="RefSeq" id="NP_666243.1">
    <property type="nucleotide sequence ID" value="NM_146131.2"/>
</dbReference>
<dbReference type="RefSeq" id="XP_006501416.1">
    <property type="nucleotide sequence ID" value="XM_006501353.3"/>
</dbReference>
<dbReference type="SMR" id="Q3TVI8"/>
<dbReference type="BioGRID" id="230856">
    <property type="interactions" value="8"/>
</dbReference>
<dbReference type="FunCoup" id="Q3TVI8">
    <property type="interactions" value="889"/>
</dbReference>
<dbReference type="IntAct" id="Q3TVI8">
    <property type="interactions" value="2"/>
</dbReference>
<dbReference type="STRING" id="10090.ENSMUSP00000040429"/>
<dbReference type="GlyConnect" id="2599">
    <property type="glycosylation" value="5 N-Linked glycans (1 site)"/>
</dbReference>
<dbReference type="GlyCosmos" id="Q3TVI8">
    <property type="glycosylation" value="1 site, 5 glycans"/>
</dbReference>
<dbReference type="GlyGen" id="Q3TVI8">
    <property type="glycosylation" value="2 sites, 6 N-linked glycans (1 site), 1 O-linked glycan (1 site)"/>
</dbReference>
<dbReference type="iPTMnet" id="Q3TVI8"/>
<dbReference type="PhosphoSitePlus" id="Q3TVI8"/>
<dbReference type="SwissPalm" id="Q3TVI8"/>
<dbReference type="jPOST" id="Q3TVI8"/>
<dbReference type="PaxDb" id="10090-ENSMUSP00000040429"/>
<dbReference type="PeptideAtlas" id="Q3TVI8"/>
<dbReference type="ProteomicsDB" id="287962"/>
<dbReference type="Pumba" id="Q3TVI8"/>
<dbReference type="Antibodypedia" id="1813">
    <property type="antibodies" value="177 antibodies from 27 providers"/>
</dbReference>
<dbReference type="DNASU" id="229534"/>
<dbReference type="Ensembl" id="ENSMUST00000038942.10">
    <property type="protein sequence ID" value="ENSMUSP00000040429.4"/>
    <property type="gene ID" value="ENSMUSG00000042613.10"/>
</dbReference>
<dbReference type="GeneID" id="229534"/>
<dbReference type="KEGG" id="mmu:229534"/>
<dbReference type="UCSC" id="uc008pzr.2">
    <property type="organism name" value="mouse"/>
</dbReference>
<dbReference type="AGR" id="MGI:2441670"/>
<dbReference type="CTD" id="57326"/>
<dbReference type="MGI" id="MGI:2441670">
    <property type="gene designation" value="Pbxip1"/>
</dbReference>
<dbReference type="VEuPathDB" id="HostDB:ENSMUSG00000042613"/>
<dbReference type="eggNOG" id="ENOG502QRIW">
    <property type="taxonomic scope" value="Eukaryota"/>
</dbReference>
<dbReference type="GeneTree" id="ENSGT00940000162147"/>
<dbReference type="HOGENOM" id="CLU_024505_0_0_1"/>
<dbReference type="InParanoid" id="Q3TVI8"/>
<dbReference type="OMA" id="GCARQEG"/>
<dbReference type="OrthoDB" id="8947092at2759"/>
<dbReference type="PhylomeDB" id="Q3TVI8"/>
<dbReference type="TreeFam" id="TF333202"/>
<dbReference type="BioGRID-ORCS" id="229534">
    <property type="hits" value="1 hit in 79 CRISPR screens"/>
</dbReference>
<dbReference type="ChiTaRS" id="Pbxip1">
    <property type="organism name" value="mouse"/>
</dbReference>
<dbReference type="PRO" id="PR:Q3TVI8"/>
<dbReference type="Proteomes" id="UP000000589">
    <property type="component" value="Chromosome 3"/>
</dbReference>
<dbReference type="RNAct" id="Q3TVI8">
    <property type="molecule type" value="protein"/>
</dbReference>
<dbReference type="Bgee" id="ENSMUSG00000042613">
    <property type="expression patterns" value="Expressed in aorta tunica media and 256 other cell types or tissues"/>
</dbReference>
<dbReference type="ExpressionAtlas" id="Q3TVI8">
    <property type="expression patterns" value="baseline and differential"/>
</dbReference>
<dbReference type="GO" id="GO:0000785">
    <property type="term" value="C:chromatin"/>
    <property type="evidence" value="ECO:0000314"/>
    <property type="project" value="MGI"/>
</dbReference>
<dbReference type="GO" id="GO:0005737">
    <property type="term" value="C:cytoplasm"/>
    <property type="evidence" value="ECO:0000314"/>
    <property type="project" value="MGI"/>
</dbReference>
<dbReference type="GO" id="GO:0005829">
    <property type="term" value="C:cytosol"/>
    <property type="evidence" value="ECO:0007669"/>
    <property type="project" value="Ensembl"/>
</dbReference>
<dbReference type="GO" id="GO:0005874">
    <property type="term" value="C:microtubule"/>
    <property type="evidence" value="ECO:0007669"/>
    <property type="project" value="UniProtKB-KW"/>
</dbReference>
<dbReference type="GO" id="GO:0005654">
    <property type="term" value="C:nucleoplasm"/>
    <property type="evidence" value="ECO:0007669"/>
    <property type="project" value="Ensembl"/>
</dbReference>
<dbReference type="GO" id="GO:0005634">
    <property type="term" value="C:nucleus"/>
    <property type="evidence" value="ECO:0000314"/>
    <property type="project" value="MGI"/>
</dbReference>
<dbReference type="GO" id="GO:0005667">
    <property type="term" value="C:transcription regulator complex"/>
    <property type="evidence" value="ECO:0000314"/>
    <property type="project" value="MGI"/>
</dbReference>
<dbReference type="GO" id="GO:0140297">
    <property type="term" value="F:DNA-binding transcription factor binding"/>
    <property type="evidence" value="ECO:0007669"/>
    <property type="project" value="Ensembl"/>
</dbReference>
<dbReference type="GO" id="GO:0003713">
    <property type="term" value="F:transcription coactivator activity"/>
    <property type="evidence" value="ECO:0000314"/>
    <property type="project" value="MGI"/>
</dbReference>
<dbReference type="GO" id="GO:0003714">
    <property type="term" value="F:transcription corepressor activity"/>
    <property type="evidence" value="ECO:0007669"/>
    <property type="project" value="Ensembl"/>
</dbReference>
<dbReference type="GO" id="GO:0061975">
    <property type="term" value="P:articular cartilage development"/>
    <property type="evidence" value="ECO:0000315"/>
    <property type="project" value="MGI"/>
</dbReference>
<dbReference type="GO" id="GO:0007155">
    <property type="term" value="P:cell adhesion"/>
    <property type="evidence" value="ECO:0000315"/>
    <property type="project" value="MGI"/>
</dbReference>
<dbReference type="GO" id="GO:0016477">
    <property type="term" value="P:cell migration"/>
    <property type="evidence" value="ECO:0000315"/>
    <property type="project" value="MGI"/>
</dbReference>
<dbReference type="GO" id="GO:0022617">
    <property type="term" value="P:extracellular matrix disassembly"/>
    <property type="evidence" value="ECO:0000315"/>
    <property type="project" value="MGI"/>
</dbReference>
<dbReference type="GO" id="GO:0010467">
    <property type="term" value="P:gene expression"/>
    <property type="evidence" value="ECO:0000315"/>
    <property type="project" value="MGI"/>
</dbReference>
<dbReference type="GO" id="GO:1901148">
    <property type="term" value="P:gene expression involved in extracellular matrix organization"/>
    <property type="evidence" value="ECO:0000315"/>
    <property type="project" value="MGI"/>
</dbReference>
<dbReference type="GO" id="GO:0030097">
    <property type="term" value="P:hemopoiesis"/>
    <property type="evidence" value="ECO:0007669"/>
    <property type="project" value="Ensembl"/>
</dbReference>
<dbReference type="GO" id="GO:1902732">
    <property type="term" value="P:positive regulation of chondrocyte proliferation"/>
    <property type="evidence" value="ECO:0000315"/>
    <property type="project" value="MGI"/>
</dbReference>
<dbReference type="GO" id="GO:0045893">
    <property type="term" value="P:positive regulation of DNA-templated transcription"/>
    <property type="evidence" value="ECO:0000314"/>
    <property type="project" value="MGI"/>
</dbReference>
<dbReference type="GO" id="GO:0030177">
    <property type="term" value="P:positive regulation of Wnt signaling pathway"/>
    <property type="evidence" value="ECO:0000314"/>
    <property type="project" value="MGI"/>
</dbReference>
<dbReference type="GO" id="GO:0002532">
    <property type="term" value="P:production of molecular mediator involved in inflammatory response"/>
    <property type="evidence" value="ECO:0000315"/>
    <property type="project" value="MGI"/>
</dbReference>
<dbReference type="InterPro" id="IPR051990">
    <property type="entry name" value="CCPG1/PBIP1"/>
</dbReference>
<dbReference type="PANTHER" id="PTHR28638">
    <property type="entry name" value="CELL CYCLE PROGRESSION PROTEIN 1"/>
    <property type="match status" value="1"/>
</dbReference>
<dbReference type="PANTHER" id="PTHR28638:SF1">
    <property type="entry name" value="PRE-B-CELL LEUKEMIA TRANSCRIPTION FACTOR-INTERACTING PROTEIN 1"/>
    <property type="match status" value="1"/>
</dbReference>
<protein>
    <recommendedName>
        <fullName>Pre-B-cell leukemia transcription factor-interacting protein 1</fullName>
    </recommendedName>
    <alternativeName>
        <fullName>Hematopoietic PBX-interacting protein</fullName>
    </alternativeName>
</protein>
<keyword id="KW-0175">Coiled coil</keyword>
<keyword id="KW-0963">Cytoplasm</keyword>
<keyword id="KW-0206">Cytoskeleton</keyword>
<keyword id="KW-0493">Microtubule</keyword>
<keyword id="KW-0539">Nucleus</keyword>
<keyword id="KW-0597">Phosphoprotein</keyword>
<keyword id="KW-1185">Reference proteome</keyword>
<comment type="function">
    <text evidence="1">Regulator of pre-B-cell leukemia transcription factors (BPXs) function. Inhibits the binding of PBX1-HOX complex to DNA and blocks the transcriptional activity of E2A-PBX1. Tethers estrogen receptor-alpha (ESR1) to microtubules and allows them to influence estrogen receptors-alpha signaling (By similarity).</text>
</comment>
<comment type="subunit">
    <text evidence="1 6">Interacts with ESR1, PBX1, PBX2 and PBX3 (By similarity). Interacts with TEX11.</text>
</comment>
<comment type="subcellular location">
    <subcellularLocation>
        <location evidence="3">Cytoplasm</location>
        <location evidence="3">Cytoskeleton</location>
    </subcellularLocation>
    <subcellularLocation>
        <location evidence="3">Nucleus</location>
    </subcellularLocation>
    <text evidence="3">Shuttles between the nucleus and the cytosol. Mainly localized in the cytoplasm, associated with microtubules. Detected in small amounts in the nucleus.</text>
</comment>
<comment type="domain">
    <text evidence="1">The C-terminal domain (AA 443-731) contains a nuclear export signal.</text>
</comment>
<comment type="domain">
    <text evidence="1">Association to the cytoskeleton through a N-terminal leucine rich-domain (AA 190-218).</text>
</comment>